<comment type="function">
    <text evidence="1">Catalyzes the GTP-dependent ribosomal translocation step during translation elongation. During this step, the ribosome changes from the pre-translocational (PRE) to the post-translocational (POST) state as the newly formed A-site-bound peptidyl-tRNA and P-site-bound deacylated tRNA move to the P and E sites, respectively. Catalyzes the coordinated movement of the two tRNA molecules, the mRNA and conformational changes in the ribosome.</text>
</comment>
<comment type="subcellular location">
    <subcellularLocation>
        <location evidence="1">Cytoplasm</location>
    </subcellularLocation>
</comment>
<comment type="similarity">
    <text evidence="1">Belongs to the TRAFAC class translation factor GTPase superfamily. Classic translation factor GTPase family. EF-G/EF-2 subfamily.</text>
</comment>
<dbReference type="EMBL" id="AE006914">
    <property type="protein sequence ID" value="AAL02712.1"/>
    <property type="molecule type" value="Genomic_DNA"/>
</dbReference>
<dbReference type="PIR" id="F97721">
    <property type="entry name" value="F97721"/>
</dbReference>
<dbReference type="RefSeq" id="WP_010976846.1">
    <property type="nucleotide sequence ID" value="NC_003103.1"/>
</dbReference>
<dbReference type="SMR" id="Q92J93"/>
<dbReference type="GeneID" id="928019"/>
<dbReference type="KEGG" id="rco:RC0174"/>
<dbReference type="PATRIC" id="fig|272944.4.peg.203"/>
<dbReference type="HOGENOM" id="CLU_002794_4_1_5"/>
<dbReference type="Proteomes" id="UP000000816">
    <property type="component" value="Chromosome"/>
</dbReference>
<dbReference type="GO" id="GO:0005737">
    <property type="term" value="C:cytoplasm"/>
    <property type="evidence" value="ECO:0007669"/>
    <property type="project" value="UniProtKB-SubCell"/>
</dbReference>
<dbReference type="GO" id="GO:0005525">
    <property type="term" value="F:GTP binding"/>
    <property type="evidence" value="ECO:0007669"/>
    <property type="project" value="UniProtKB-UniRule"/>
</dbReference>
<dbReference type="GO" id="GO:0003924">
    <property type="term" value="F:GTPase activity"/>
    <property type="evidence" value="ECO:0007669"/>
    <property type="project" value="InterPro"/>
</dbReference>
<dbReference type="GO" id="GO:0003746">
    <property type="term" value="F:translation elongation factor activity"/>
    <property type="evidence" value="ECO:0007669"/>
    <property type="project" value="UniProtKB-UniRule"/>
</dbReference>
<dbReference type="GO" id="GO:0032790">
    <property type="term" value="P:ribosome disassembly"/>
    <property type="evidence" value="ECO:0007669"/>
    <property type="project" value="TreeGrafter"/>
</dbReference>
<dbReference type="CDD" id="cd01886">
    <property type="entry name" value="EF-G"/>
    <property type="match status" value="1"/>
</dbReference>
<dbReference type="CDD" id="cd16262">
    <property type="entry name" value="EFG_III"/>
    <property type="match status" value="1"/>
</dbReference>
<dbReference type="CDD" id="cd01434">
    <property type="entry name" value="EFG_mtEFG1_IV"/>
    <property type="match status" value="1"/>
</dbReference>
<dbReference type="CDD" id="cd03713">
    <property type="entry name" value="EFG_mtEFG_C"/>
    <property type="match status" value="1"/>
</dbReference>
<dbReference type="CDD" id="cd04088">
    <property type="entry name" value="EFG_mtEFG_II"/>
    <property type="match status" value="1"/>
</dbReference>
<dbReference type="FunFam" id="2.40.30.10:FF:000006">
    <property type="entry name" value="Elongation factor G"/>
    <property type="match status" value="1"/>
</dbReference>
<dbReference type="FunFam" id="3.30.230.10:FF:000003">
    <property type="entry name" value="Elongation factor G"/>
    <property type="match status" value="1"/>
</dbReference>
<dbReference type="FunFam" id="3.30.70.240:FF:000001">
    <property type="entry name" value="Elongation factor G"/>
    <property type="match status" value="1"/>
</dbReference>
<dbReference type="FunFam" id="3.30.70.870:FF:000001">
    <property type="entry name" value="Elongation factor G"/>
    <property type="match status" value="1"/>
</dbReference>
<dbReference type="FunFam" id="3.40.50.300:FF:000029">
    <property type="entry name" value="Elongation factor G"/>
    <property type="match status" value="1"/>
</dbReference>
<dbReference type="Gene3D" id="3.30.230.10">
    <property type="match status" value="1"/>
</dbReference>
<dbReference type="Gene3D" id="3.30.70.240">
    <property type="match status" value="1"/>
</dbReference>
<dbReference type="Gene3D" id="3.30.70.870">
    <property type="entry name" value="Elongation Factor G (Translational Gtpase), domain 3"/>
    <property type="match status" value="1"/>
</dbReference>
<dbReference type="Gene3D" id="3.40.50.300">
    <property type="entry name" value="P-loop containing nucleotide triphosphate hydrolases"/>
    <property type="match status" value="1"/>
</dbReference>
<dbReference type="Gene3D" id="2.40.30.10">
    <property type="entry name" value="Translation factors"/>
    <property type="match status" value="1"/>
</dbReference>
<dbReference type="HAMAP" id="MF_00054_B">
    <property type="entry name" value="EF_G_EF_2_B"/>
    <property type="match status" value="1"/>
</dbReference>
<dbReference type="InterPro" id="IPR053905">
    <property type="entry name" value="EF-G-like_DII"/>
</dbReference>
<dbReference type="InterPro" id="IPR041095">
    <property type="entry name" value="EFG_II"/>
</dbReference>
<dbReference type="InterPro" id="IPR009022">
    <property type="entry name" value="EFG_III"/>
</dbReference>
<dbReference type="InterPro" id="IPR035647">
    <property type="entry name" value="EFG_III/V"/>
</dbReference>
<dbReference type="InterPro" id="IPR047872">
    <property type="entry name" value="EFG_IV"/>
</dbReference>
<dbReference type="InterPro" id="IPR035649">
    <property type="entry name" value="EFG_V"/>
</dbReference>
<dbReference type="InterPro" id="IPR000640">
    <property type="entry name" value="EFG_V-like"/>
</dbReference>
<dbReference type="InterPro" id="IPR031157">
    <property type="entry name" value="G_TR_CS"/>
</dbReference>
<dbReference type="InterPro" id="IPR027417">
    <property type="entry name" value="P-loop_NTPase"/>
</dbReference>
<dbReference type="InterPro" id="IPR020568">
    <property type="entry name" value="Ribosomal_Su5_D2-typ_SF"/>
</dbReference>
<dbReference type="InterPro" id="IPR014721">
    <property type="entry name" value="Ribsml_uS5_D2-typ_fold_subgr"/>
</dbReference>
<dbReference type="InterPro" id="IPR005225">
    <property type="entry name" value="Small_GTP-bd"/>
</dbReference>
<dbReference type="InterPro" id="IPR000795">
    <property type="entry name" value="T_Tr_GTP-bd_dom"/>
</dbReference>
<dbReference type="InterPro" id="IPR009000">
    <property type="entry name" value="Transl_B-barrel_sf"/>
</dbReference>
<dbReference type="InterPro" id="IPR004540">
    <property type="entry name" value="Transl_elong_EFG/EF2"/>
</dbReference>
<dbReference type="InterPro" id="IPR005517">
    <property type="entry name" value="Transl_elong_EFG/EF2_IV"/>
</dbReference>
<dbReference type="NCBIfam" id="TIGR00484">
    <property type="entry name" value="EF-G"/>
    <property type="match status" value="1"/>
</dbReference>
<dbReference type="NCBIfam" id="NF009381">
    <property type="entry name" value="PRK12740.1-5"/>
    <property type="match status" value="1"/>
</dbReference>
<dbReference type="NCBIfam" id="TIGR00231">
    <property type="entry name" value="small_GTP"/>
    <property type="match status" value="1"/>
</dbReference>
<dbReference type="PANTHER" id="PTHR43261:SF1">
    <property type="entry name" value="RIBOSOME-RELEASING FACTOR 2, MITOCHONDRIAL"/>
    <property type="match status" value="1"/>
</dbReference>
<dbReference type="PANTHER" id="PTHR43261">
    <property type="entry name" value="TRANSLATION ELONGATION FACTOR G-RELATED"/>
    <property type="match status" value="1"/>
</dbReference>
<dbReference type="Pfam" id="PF22042">
    <property type="entry name" value="EF-G_D2"/>
    <property type="match status" value="1"/>
</dbReference>
<dbReference type="Pfam" id="PF00679">
    <property type="entry name" value="EFG_C"/>
    <property type="match status" value="1"/>
</dbReference>
<dbReference type="Pfam" id="PF14492">
    <property type="entry name" value="EFG_III"/>
    <property type="match status" value="1"/>
</dbReference>
<dbReference type="Pfam" id="PF03764">
    <property type="entry name" value="EFG_IV"/>
    <property type="match status" value="1"/>
</dbReference>
<dbReference type="Pfam" id="PF00009">
    <property type="entry name" value="GTP_EFTU"/>
    <property type="match status" value="1"/>
</dbReference>
<dbReference type="PRINTS" id="PR00315">
    <property type="entry name" value="ELONGATNFCT"/>
</dbReference>
<dbReference type="SMART" id="SM00838">
    <property type="entry name" value="EFG_C"/>
    <property type="match status" value="1"/>
</dbReference>
<dbReference type="SMART" id="SM00889">
    <property type="entry name" value="EFG_IV"/>
    <property type="match status" value="1"/>
</dbReference>
<dbReference type="SUPFAM" id="SSF54980">
    <property type="entry name" value="EF-G C-terminal domain-like"/>
    <property type="match status" value="2"/>
</dbReference>
<dbReference type="SUPFAM" id="SSF52540">
    <property type="entry name" value="P-loop containing nucleoside triphosphate hydrolases"/>
    <property type="match status" value="1"/>
</dbReference>
<dbReference type="SUPFAM" id="SSF54211">
    <property type="entry name" value="Ribosomal protein S5 domain 2-like"/>
    <property type="match status" value="1"/>
</dbReference>
<dbReference type="SUPFAM" id="SSF50447">
    <property type="entry name" value="Translation proteins"/>
    <property type="match status" value="1"/>
</dbReference>
<dbReference type="PROSITE" id="PS00301">
    <property type="entry name" value="G_TR_1"/>
    <property type="match status" value="1"/>
</dbReference>
<dbReference type="PROSITE" id="PS51722">
    <property type="entry name" value="G_TR_2"/>
    <property type="match status" value="1"/>
</dbReference>
<name>EFG_RICCN</name>
<accession>Q92J93</accession>
<gene>
    <name evidence="1" type="primary">fusA</name>
    <name type="ordered locus">RC0174</name>
</gene>
<feature type="chain" id="PRO_0000091196" description="Elongation factor G">
    <location>
        <begin position="1"/>
        <end position="699"/>
    </location>
</feature>
<feature type="domain" description="tr-type G">
    <location>
        <begin position="8"/>
        <end position="283"/>
    </location>
</feature>
<feature type="binding site" evidence="1">
    <location>
        <begin position="17"/>
        <end position="24"/>
    </location>
    <ligand>
        <name>GTP</name>
        <dbReference type="ChEBI" id="CHEBI:37565"/>
    </ligand>
</feature>
<feature type="binding site" evidence="1">
    <location>
        <begin position="81"/>
        <end position="85"/>
    </location>
    <ligand>
        <name>GTP</name>
        <dbReference type="ChEBI" id="CHEBI:37565"/>
    </ligand>
</feature>
<feature type="binding site" evidence="1">
    <location>
        <begin position="135"/>
        <end position="138"/>
    </location>
    <ligand>
        <name>GTP</name>
        <dbReference type="ChEBI" id="CHEBI:37565"/>
    </ligand>
</feature>
<reference key="1">
    <citation type="journal article" date="2001" name="Science">
        <title>Mechanisms of evolution in Rickettsia conorii and R. prowazekii.</title>
        <authorList>
            <person name="Ogata H."/>
            <person name="Audic S."/>
            <person name="Renesto-Audiffren P."/>
            <person name="Fournier P.-E."/>
            <person name="Barbe V."/>
            <person name="Samson D."/>
            <person name="Roux V."/>
            <person name="Cossart P."/>
            <person name="Weissenbach J."/>
            <person name="Claverie J.-M."/>
            <person name="Raoult D."/>
        </authorList>
    </citation>
    <scope>NUCLEOTIDE SEQUENCE [LARGE SCALE GENOMIC DNA]</scope>
    <source>
        <strain>ATCC VR-613 / Malish 7</strain>
    </source>
</reference>
<organism>
    <name type="scientific">Rickettsia conorii (strain ATCC VR-613 / Malish 7)</name>
    <dbReference type="NCBI Taxonomy" id="272944"/>
    <lineage>
        <taxon>Bacteria</taxon>
        <taxon>Pseudomonadati</taxon>
        <taxon>Pseudomonadota</taxon>
        <taxon>Alphaproteobacteria</taxon>
        <taxon>Rickettsiales</taxon>
        <taxon>Rickettsiaceae</taxon>
        <taxon>Rickettsieae</taxon>
        <taxon>Rickettsia</taxon>
        <taxon>spotted fever group</taxon>
    </lineage>
</organism>
<protein>
    <recommendedName>
        <fullName evidence="1">Elongation factor G</fullName>
        <shortName evidence="1">EF-G</shortName>
    </recommendedName>
</protein>
<evidence type="ECO:0000255" key="1">
    <source>
        <dbReference type="HAMAP-Rule" id="MF_00054"/>
    </source>
</evidence>
<sequence>MSKINKLEHIRNIGICAHIDAGKTTTTERILYYTGKSHKIGEVHEGGATMDWMEQEQERGITITSAATTCRWQDKIINIIDTPGHVDFTIEVERSLRVLDGAVAVFDGVAGVEPQSETVWRQADKYNVPRMCFVNKMDRMGADFYRCVEMLKDRLGAKPLVIQLPVGIEENFKGIIDLIKMKAVIWKDEALGAEYFEEDIPADMKDKAEEYRAKLLDMVVELDDHVMEKYLSGEEVTAEEIKRLIRKGTISAAFYPVLCGSAFKNKGVQPLLDAVVDFLPSPIDIGIVKGMEVSTGEEKDFPISVTEPFAALAFKIMNDPFVGSLTFIRIYSGKITSGTTVINTVKNKREKIGRMLLMHANNREDVKEASAGDIVALAGLKDTTTGDTLSDIDQQVILERMEFPEPVIELAVEPKSTADQEKMGLALSRLAAEDPSFRVSTDYETGQTVIKGMGELHLEIIIDRMRREFKVEANIGAPQVAYRETITKVCEIDYTHKKQSGGAGQFARVKIIFEPLKEVKDLKDEDKNKIFVFESKIIGGAVPKEYIPGVEKGLNNIRETGVIAGYPMIDFKATLVDGAFHDVDSSVLAFEIAAKAAFREGMPKGNPKLLEPIMQVEVITPDEYMGDIIGDLNSRRGQIQSMDPRGNAQVVTANVPLAEMFGYVNTLRSLSQGRAQFSMIFSHYDQVPSQVADIIKAKK</sequence>
<proteinExistence type="inferred from homology"/>
<keyword id="KW-0963">Cytoplasm</keyword>
<keyword id="KW-0251">Elongation factor</keyword>
<keyword id="KW-0342">GTP-binding</keyword>
<keyword id="KW-0547">Nucleotide-binding</keyword>
<keyword id="KW-0648">Protein biosynthesis</keyword>